<proteinExistence type="evidence at protein level"/>
<evidence type="ECO:0000250" key="1">
    <source>
        <dbReference type="UniProtKB" id="A0A1C9J6A7"/>
    </source>
</evidence>
<evidence type="ECO:0000250" key="2">
    <source>
        <dbReference type="UniProtKB" id="Q40577"/>
    </source>
</evidence>
<evidence type="ECO:0000250" key="3">
    <source>
        <dbReference type="UniProtKB" id="Q5GJ59"/>
    </source>
</evidence>
<evidence type="ECO:0000250" key="4">
    <source>
        <dbReference type="UniProtKB" id="Q6JD73"/>
    </source>
</evidence>
<evidence type="ECO:0000250" key="5">
    <source>
        <dbReference type="UniProtKB" id="Q6Q3H2"/>
    </source>
</evidence>
<evidence type="ECO:0000269" key="6">
    <source>
    </source>
</evidence>
<evidence type="ECO:0000303" key="7">
    <source>
    </source>
</evidence>
<evidence type="ECO:0000303" key="8">
    <source ref="1"/>
</evidence>
<evidence type="ECO:0000305" key="9"/>
<evidence type="ECO:0000305" key="10">
    <source>
    </source>
</evidence>
<evidence type="ECO:0000312" key="11">
    <source>
        <dbReference type="EMBL" id="ONL98158.1"/>
    </source>
</evidence>
<reference key="1">
    <citation type="submission" date="2005-02" db="EMBL/GenBank/DDBJ databases">
        <title>The sesquiterpene synthase family of Zea mays.</title>
        <authorList>
            <person name="Schnee C."/>
            <person name="Koellner T.G."/>
            <person name="Kubisch S."/>
            <person name="Gershenzon J."/>
            <person name="Degenhardt J."/>
        </authorList>
    </citation>
    <scope>NUCLEOTIDE SEQUENCE [MRNA]</scope>
    <source>
        <strain>cv. B73</strain>
    </source>
</reference>
<reference key="2">
    <citation type="journal article" date="2009" name="Science">
        <title>The B73 maize genome: complexity, diversity, and dynamics.</title>
        <authorList>
            <person name="Schnable P.S."/>
            <person name="Ware D."/>
            <person name="Fulton R.S."/>
            <person name="Stein J.C."/>
            <person name="Wei F."/>
            <person name="Pasternak S."/>
            <person name="Liang C."/>
            <person name="Zhang J."/>
            <person name="Fulton L."/>
            <person name="Graves T.A."/>
            <person name="Minx P."/>
            <person name="Reily A.D."/>
            <person name="Courtney L."/>
            <person name="Kruchowski S.S."/>
            <person name="Tomlinson C."/>
            <person name="Strong C."/>
            <person name="Delehaunty K."/>
            <person name="Fronick C."/>
            <person name="Courtney B."/>
            <person name="Rock S.M."/>
            <person name="Belter E."/>
            <person name="Du F."/>
            <person name="Kim K."/>
            <person name="Abbott R.M."/>
            <person name="Cotton M."/>
            <person name="Levy A."/>
            <person name="Marchetto P."/>
            <person name="Ochoa K."/>
            <person name="Jackson S.M."/>
            <person name="Gillam B."/>
            <person name="Chen W."/>
            <person name="Yan L."/>
            <person name="Higginbotham J."/>
            <person name="Cardenas M."/>
            <person name="Waligorski J."/>
            <person name="Applebaum E."/>
            <person name="Phelps L."/>
            <person name="Falcone J."/>
            <person name="Kanchi K."/>
            <person name="Thane T."/>
            <person name="Scimone A."/>
            <person name="Thane N."/>
            <person name="Henke J."/>
            <person name="Wang T."/>
            <person name="Ruppert J."/>
            <person name="Shah N."/>
            <person name="Rotter K."/>
            <person name="Hodges J."/>
            <person name="Ingenthron E."/>
            <person name="Cordes M."/>
            <person name="Kohlberg S."/>
            <person name="Sgro J."/>
            <person name="Delgado B."/>
            <person name="Mead K."/>
            <person name="Chinwalla A."/>
            <person name="Leonard S."/>
            <person name="Crouse K."/>
            <person name="Collura K."/>
            <person name="Kudrna D."/>
            <person name="Currie J."/>
            <person name="He R."/>
            <person name="Angelova A."/>
            <person name="Rajasekar S."/>
            <person name="Mueller T."/>
            <person name="Lomeli R."/>
            <person name="Scara G."/>
            <person name="Ko A."/>
            <person name="Delaney K."/>
            <person name="Wissotski M."/>
            <person name="Lopez G."/>
            <person name="Campos D."/>
            <person name="Braidotti M."/>
            <person name="Ashley E."/>
            <person name="Golser W."/>
            <person name="Kim H."/>
            <person name="Lee S."/>
            <person name="Lin J."/>
            <person name="Dujmic Z."/>
            <person name="Kim W."/>
            <person name="Talag J."/>
            <person name="Zuccolo A."/>
            <person name="Fan C."/>
            <person name="Sebastian A."/>
            <person name="Kramer M."/>
            <person name="Spiegel L."/>
            <person name="Nascimento L."/>
            <person name="Zutavern T."/>
            <person name="Miller B."/>
            <person name="Ambroise C."/>
            <person name="Muller S."/>
            <person name="Spooner W."/>
            <person name="Narechania A."/>
            <person name="Ren L."/>
            <person name="Wei S."/>
            <person name="Kumari S."/>
            <person name="Faga B."/>
            <person name="Levy M.J."/>
            <person name="McMahan L."/>
            <person name="Van Buren P."/>
            <person name="Vaughn M.W."/>
            <person name="Ying K."/>
            <person name="Yeh C.-T."/>
            <person name="Emrich S.J."/>
            <person name="Jia Y."/>
            <person name="Kalyanaraman A."/>
            <person name="Hsia A.-P."/>
            <person name="Barbazuk W.B."/>
            <person name="Baucom R.S."/>
            <person name="Brutnell T.P."/>
            <person name="Carpita N.C."/>
            <person name="Chaparro C."/>
            <person name="Chia J.-M."/>
            <person name="Deragon J.-M."/>
            <person name="Estill J.C."/>
            <person name="Fu Y."/>
            <person name="Jeddeloh J.A."/>
            <person name="Han Y."/>
            <person name="Lee H."/>
            <person name="Li P."/>
            <person name="Lisch D.R."/>
            <person name="Liu S."/>
            <person name="Liu Z."/>
            <person name="Nagel D.H."/>
            <person name="McCann M.C."/>
            <person name="SanMiguel P."/>
            <person name="Myers A.M."/>
            <person name="Nettleton D."/>
            <person name="Nguyen J."/>
            <person name="Penning B.W."/>
            <person name="Ponnala L."/>
            <person name="Schneider K.L."/>
            <person name="Schwartz D.C."/>
            <person name="Sharma A."/>
            <person name="Soderlund C."/>
            <person name="Springer N.M."/>
            <person name="Sun Q."/>
            <person name="Wang H."/>
            <person name="Waterman M."/>
            <person name="Westerman R."/>
            <person name="Wolfgruber T.K."/>
            <person name="Yang L."/>
            <person name="Yu Y."/>
            <person name="Zhang L."/>
            <person name="Zhou S."/>
            <person name="Zhu Q."/>
            <person name="Bennetzen J.L."/>
            <person name="Dawe R.K."/>
            <person name="Jiang J."/>
            <person name="Jiang N."/>
            <person name="Presting G.G."/>
            <person name="Wessler S.R."/>
            <person name="Aluru S."/>
            <person name="Martienssen R.A."/>
            <person name="Clifton S.W."/>
            <person name="McCombie W.R."/>
            <person name="Wing R.A."/>
            <person name="Wilson R.K."/>
        </authorList>
    </citation>
    <scope>NUCLEOTIDE SEQUENCE [LARGE SCALE GENOMIC DNA]</scope>
    <source>
        <strain>cv. B73</strain>
        <tissue>Seedling</tissue>
    </source>
</reference>
<reference key="3">
    <citation type="journal article" date="2011" name="J. Chem. Ecol.">
        <title>Attractiveness of constitutive and herbivore-induced sesquiterpene blends of maize to the parasitic wasp Cotesia marginiventris (Cresson).</title>
        <authorList>
            <person name="Fontana A."/>
            <person name="Held M."/>
            <person name="Fantaye C.A."/>
            <person name="Turlings T.C."/>
            <person name="Degenhardt J."/>
            <person name="Gershenzon J."/>
        </authorList>
    </citation>
    <scope>FUNCTION</scope>
    <scope>CATALYTIC ACTIVITY</scope>
</reference>
<reference key="4">
    <citation type="journal article" date="2019" name="Planta">
        <title>Biosynthesis and function of terpenoid defense compounds in maize (Zea mays).</title>
        <authorList>
            <person name="Block A.K."/>
            <person name="Vaughan M.M."/>
            <person name="Schmelz E.A."/>
            <person name="Christensen S.A."/>
        </authorList>
    </citation>
    <scope>REVIEW</scope>
</reference>
<feature type="chain" id="PRO_0000447516" description="Alpha-copaene synthase">
    <location>
        <begin position="1"/>
        <end position="539"/>
    </location>
</feature>
<feature type="short sequence motif" description="DDXXD motif" evidence="1">
    <location>
        <begin position="290"/>
        <end position="294"/>
    </location>
</feature>
<feature type="binding site" evidence="2">
    <location>
        <position position="290"/>
    </location>
    <ligand>
        <name>Mg(2+)</name>
        <dbReference type="ChEBI" id="CHEBI:18420"/>
        <label>1</label>
    </ligand>
</feature>
<feature type="binding site" evidence="2">
    <location>
        <position position="290"/>
    </location>
    <ligand>
        <name>Mg(2+)</name>
        <dbReference type="ChEBI" id="CHEBI:18420"/>
        <label>2</label>
    </ligand>
</feature>
<feature type="binding site" evidence="1">
    <location>
        <position position="290"/>
    </location>
    <ligand>
        <name>substrate</name>
    </ligand>
</feature>
<feature type="binding site" evidence="2">
    <location>
        <position position="294"/>
    </location>
    <ligand>
        <name>Mg(2+)</name>
        <dbReference type="ChEBI" id="CHEBI:18420"/>
        <label>1</label>
    </ligand>
</feature>
<feature type="binding site" evidence="2">
    <location>
        <position position="294"/>
    </location>
    <ligand>
        <name>Mg(2+)</name>
        <dbReference type="ChEBI" id="CHEBI:18420"/>
        <label>2</label>
    </ligand>
</feature>
<feature type="binding site" evidence="1">
    <location>
        <position position="294"/>
    </location>
    <ligand>
        <name>substrate</name>
    </ligand>
</feature>
<feature type="binding site" evidence="1">
    <location>
        <position position="432"/>
    </location>
    <ligand>
        <name>substrate</name>
    </ligand>
</feature>
<sequence length="539" mass="62026">MAPKTVWGYFFIDYIPEPLQVSDKQRVVELKGEVARLFEDCNCKDVVERMNLVDVVQRLGIDHHFKEQIDTALKNIQGAEFNSSDLHEVSLRFRLLRQHGLWVPADQFDKFRRQEDGSFSSDIADDPKGLLGLYNAASLLIHGEEVLEEALLFARRHLESIRRGGGLHDSPYLSEQVGRSLKIPLPRTLKRLEAVSYIPEYSSADDTTYIHPEILELARLDFNLLQHVHQNELRTVTQWWKGLCDVIGPDYGRDRIVECYFWAFSMYYEEEHARARMILARLIMLASLLDDTFDDRATLQECRELNKAIERWDESDDISLLPECIQKFFLEVIRNFAEFEDELEAHEKYRVAYARKAYQLLSKSYLQEVEWCHQGYTPSFDDHVSVSTASAGIQVLCVGMLVGMGDAATKEVFEWMIGSNNRVVRACAEVTRFMDDMADFKRGKNKTDVATTVECYMKEQNVTGEVAFDKIGSFVEDAWKTLNQAALVGDRALLPVVQRVAGLAMSMMVFFHGKIDRYTDSEHLKETLEDLFVNHVPLC</sequence>
<comment type="function">
    <text evidence="6">Converts farnesyl diphosphate to the bicyclic olefins alpha-copaene, (E)-beta-caryophyllene, and to the macrocyclic sesquiterpene germacrene D (PubMed:21607717). Also mediates the biosynthesis of minor sesquiterpene hydrocarbons including delta-cadinene (PubMed:21607717). Involved in indirect defense by producing volatile signals attracting natural enemies of herbivores (PubMed:21607717).</text>
</comment>
<comment type="catalytic activity">
    <reaction evidence="6">
        <text>(2E,6E)-farnesyl diphosphate = alpha-copaene + diphosphate</text>
        <dbReference type="Rhea" id="RHEA:33991"/>
        <dbReference type="ChEBI" id="CHEBI:10221"/>
        <dbReference type="ChEBI" id="CHEBI:33019"/>
        <dbReference type="ChEBI" id="CHEBI:175763"/>
        <dbReference type="EC" id="4.2.3.133"/>
    </reaction>
    <physiologicalReaction direction="left-to-right" evidence="6">
        <dbReference type="Rhea" id="RHEA:33992"/>
    </physiologicalReaction>
</comment>
<comment type="catalytic activity">
    <reaction evidence="6">
        <text>(2E,6E)-farnesyl diphosphate = (+)-germacrene D + diphosphate</text>
        <dbReference type="Rhea" id="RHEA:30427"/>
        <dbReference type="ChEBI" id="CHEBI:33019"/>
        <dbReference type="ChEBI" id="CHEBI:49046"/>
        <dbReference type="ChEBI" id="CHEBI:175763"/>
        <dbReference type="EC" id="4.2.3.77"/>
    </reaction>
    <physiologicalReaction direction="left-to-right" evidence="6">
        <dbReference type="Rhea" id="RHEA:30428"/>
    </physiologicalReaction>
</comment>
<comment type="catalytic activity">
    <reaction evidence="6">
        <text>(2E,6E)-farnesyl diphosphate = (-)-(E)-beta-caryophyllene + diphosphate</text>
        <dbReference type="Rhea" id="RHEA:28294"/>
        <dbReference type="ChEBI" id="CHEBI:10357"/>
        <dbReference type="ChEBI" id="CHEBI:33019"/>
        <dbReference type="ChEBI" id="CHEBI:175763"/>
        <dbReference type="EC" id="4.2.3.57"/>
    </reaction>
    <physiologicalReaction direction="left-to-right" evidence="6">
        <dbReference type="Rhea" id="RHEA:28295"/>
    </physiologicalReaction>
</comment>
<comment type="catalytic activity">
    <reaction evidence="6">
        <text>(2E,6E)-farnesyl diphosphate = delta-cadinene + diphosphate</text>
        <dbReference type="Rhea" id="RHEA:56556"/>
        <dbReference type="ChEBI" id="CHEBI:33019"/>
        <dbReference type="ChEBI" id="CHEBI:140564"/>
        <dbReference type="ChEBI" id="CHEBI:175763"/>
    </reaction>
    <physiologicalReaction direction="left-to-right" evidence="6">
        <dbReference type="Rhea" id="RHEA:56557"/>
    </physiologicalReaction>
</comment>
<comment type="cofactor">
    <cofactor evidence="3">
        <name>Mg(2+)</name>
        <dbReference type="ChEBI" id="CHEBI:18420"/>
    </cofactor>
    <cofactor evidence="4">
        <name>Mn(2+)</name>
        <dbReference type="ChEBI" id="CHEBI:29035"/>
    </cofactor>
</comment>
<comment type="pathway">
    <text evidence="6 10">Secondary metabolite biosynthesis; terpenoid biosynthesis.</text>
</comment>
<comment type="subunit">
    <text evidence="4">Monomer.</text>
</comment>
<comment type="subcellular location">
    <subcellularLocation>
        <location evidence="5">Cytoplasm</location>
    </subcellularLocation>
</comment>
<comment type="domain">
    <text evidence="1">The Asp-Asp-Xaa-Xaa-Asp/Glu (DDXXD/E) motif is important for the catalytic activity, presumably through binding to Mg(2+).</text>
</comment>
<comment type="similarity">
    <text evidence="9">Belongs to the terpene synthase family.</text>
</comment>
<accession>Q29VN3</accession>
<gene>
    <name evidence="8" type="primary">TPS8</name>
    <name evidence="11" type="ORF">ZEAMMB73_Zm00001d029195</name>
</gene>
<dbReference type="EC" id="4.2.3.133" evidence="6"/>
<dbReference type="EC" id="4.2.3.77" evidence="6"/>
<dbReference type="EC" id="4.2.3.57" evidence="6"/>
<dbReference type="EC" id="4.2.3.-" evidence="6"/>
<dbReference type="EMBL" id="AY928080">
    <property type="protein sequence ID" value="AAX99148.1"/>
    <property type="molecule type" value="mRNA"/>
</dbReference>
<dbReference type="EMBL" id="CM007647">
    <property type="protein sequence ID" value="ONL98158.1"/>
    <property type="molecule type" value="Genomic_DNA"/>
</dbReference>
<dbReference type="RefSeq" id="NP_001105912.1">
    <property type="nucleotide sequence ID" value="NM_001112442.1"/>
</dbReference>
<dbReference type="SMR" id="Q29VN3"/>
<dbReference type="IntAct" id="Q29VN3">
    <property type="interactions" value="7"/>
</dbReference>
<dbReference type="STRING" id="4577.Q29VN3"/>
<dbReference type="PaxDb" id="4577-GRMZM2G038153_P01"/>
<dbReference type="GeneID" id="732834"/>
<dbReference type="KEGG" id="zma:732834"/>
<dbReference type="eggNOG" id="ENOG502QUCN">
    <property type="taxonomic scope" value="Eukaryota"/>
</dbReference>
<dbReference type="HOGENOM" id="CLU_003125_7_0_1"/>
<dbReference type="InParanoid" id="Q29VN3"/>
<dbReference type="OrthoDB" id="1877784at2759"/>
<dbReference type="UniPathway" id="UPA00213"/>
<dbReference type="Proteomes" id="UP000007305">
    <property type="component" value="Unplaced"/>
</dbReference>
<dbReference type="ExpressionAtlas" id="Q29VN3">
    <property type="expression patterns" value="baseline and differential"/>
</dbReference>
<dbReference type="GO" id="GO:0005737">
    <property type="term" value="C:cytoplasm"/>
    <property type="evidence" value="ECO:0007669"/>
    <property type="project" value="UniProtKB-SubCell"/>
</dbReference>
<dbReference type="GO" id="GO:0080016">
    <property type="term" value="F:(-)-E-beta-caryophyllene synthase activity"/>
    <property type="evidence" value="ECO:0007669"/>
    <property type="project" value="UniProtKB-EC"/>
</dbReference>
<dbReference type="GO" id="GO:0102877">
    <property type="term" value="F:alpha-copaene synthase activity"/>
    <property type="evidence" value="ECO:0007669"/>
    <property type="project" value="UniProtKB-EC"/>
</dbReference>
<dbReference type="GO" id="GO:0000287">
    <property type="term" value="F:magnesium ion binding"/>
    <property type="evidence" value="ECO:0007669"/>
    <property type="project" value="InterPro"/>
</dbReference>
<dbReference type="GO" id="GO:0016102">
    <property type="term" value="P:diterpenoid biosynthetic process"/>
    <property type="evidence" value="ECO:0007669"/>
    <property type="project" value="InterPro"/>
</dbReference>
<dbReference type="CDD" id="cd00684">
    <property type="entry name" value="Terpene_cyclase_plant_C1"/>
    <property type="match status" value="1"/>
</dbReference>
<dbReference type="Gene3D" id="1.10.600.10">
    <property type="entry name" value="Farnesyl Diphosphate Synthase"/>
    <property type="match status" value="1"/>
</dbReference>
<dbReference type="Gene3D" id="1.50.10.130">
    <property type="entry name" value="Terpene synthase, N-terminal domain"/>
    <property type="match status" value="1"/>
</dbReference>
<dbReference type="InterPro" id="IPR008949">
    <property type="entry name" value="Isoprenoid_synthase_dom_sf"/>
</dbReference>
<dbReference type="InterPro" id="IPR034741">
    <property type="entry name" value="Terpene_cyclase-like_1_C"/>
</dbReference>
<dbReference type="InterPro" id="IPR044814">
    <property type="entry name" value="Terpene_cyclase_plant_C1"/>
</dbReference>
<dbReference type="InterPro" id="IPR001906">
    <property type="entry name" value="Terpene_synth_N"/>
</dbReference>
<dbReference type="InterPro" id="IPR036965">
    <property type="entry name" value="Terpene_synth_N_sf"/>
</dbReference>
<dbReference type="InterPro" id="IPR050148">
    <property type="entry name" value="Terpene_synthase-like"/>
</dbReference>
<dbReference type="InterPro" id="IPR005630">
    <property type="entry name" value="Terpene_synthase_metal-bd"/>
</dbReference>
<dbReference type="InterPro" id="IPR008930">
    <property type="entry name" value="Terpenoid_cyclase/PrenylTrfase"/>
</dbReference>
<dbReference type="PANTHER" id="PTHR31225:SF222">
    <property type="entry name" value="ALPHA-COPAENE SYNTHASE"/>
    <property type="match status" value="1"/>
</dbReference>
<dbReference type="PANTHER" id="PTHR31225">
    <property type="entry name" value="OS04G0344100 PROTEIN-RELATED"/>
    <property type="match status" value="1"/>
</dbReference>
<dbReference type="Pfam" id="PF01397">
    <property type="entry name" value="Terpene_synth"/>
    <property type="match status" value="1"/>
</dbReference>
<dbReference type="Pfam" id="PF03936">
    <property type="entry name" value="Terpene_synth_C"/>
    <property type="match status" value="1"/>
</dbReference>
<dbReference type="SFLD" id="SFLDS00005">
    <property type="entry name" value="Isoprenoid_Synthase_Type_I"/>
    <property type="match status" value="1"/>
</dbReference>
<dbReference type="SFLD" id="SFLDG01019">
    <property type="entry name" value="Terpene_Cyclase_Like_1_C_Termi"/>
    <property type="match status" value="1"/>
</dbReference>
<dbReference type="SUPFAM" id="SSF48239">
    <property type="entry name" value="Terpenoid cyclases/Protein prenyltransferases"/>
    <property type="match status" value="1"/>
</dbReference>
<dbReference type="SUPFAM" id="SSF48576">
    <property type="entry name" value="Terpenoid synthases"/>
    <property type="match status" value="1"/>
</dbReference>
<organism>
    <name type="scientific">Zea mays</name>
    <name type="common">Maize</name>
    <dbReference type="NCBI Taxonomy" id="4577"/>
    <lineage>
        <taxon>Eukaryota</taxon>
        <taxon>Viridiplantae</taxon>
        <taxon>Streptophyta</taxon>
        <taxon>Embryophyta</taxon>
        <taxon>Tracheophyta</taxon>
        <taxon>Spermatophyta</taxon>
        <taxon>Magnoliopsida</taxon>
        <taxon>Liliopsida</taxon>
        <taxon>Poales</taxon>
        <taxon>Poaceae</taxon>
        <taxon>PACMAD clade</taxon>
        <taxon>Panicoideae</taxon>
        <taxon>Andropogonodae</taxon>
        <taxon>Andropogoneae</taxon>
        <taxon>Tripsacinae</taxon>
        <taxon>Zea</taxon>
    </lineage>
</organism>
<name>TPS8_MAIZE</name>
<keyword id="KW-0963">Cytoplasm</keyword>
<keyword id="KW-0456">Lyase</keyword>
<keyword id="KW-0460">Magnesium</keyword>
<keyword id="KW-0464">Manganese</keyword>
<keyword id="KW-0479">Metal-binding</keyword>
<keyword id="KW-1185">Reference proteome</keyword>
<protein>
    <recommendedName>
        <fullName evidence="7">Alpha-copaene synthase</fullName>
        <ecNumber evidence="6">4.2.3.133</ecNumber>
    </recommendedName>
    <alternativeName>
        <fullName evidence="7">(+)-germacrene D synthase</fullName>
        <ecNumber evidence="6">4.2.3.77</ecNumber>
    </alternativeName>
    <alternativeName>
        <fullName evidence="7">Beta-caryophyllene synthase</fullName>
        <ecNumber evidence="6">4.2.3.57</ecNumber>
    </alternativeName>
    <alternativeName>
        <fullName evidence="7">Delta-cadinene synthase</fullName>
        <ecNumber evidence="6">4.2.3.-</ecNumber>
    </alternativeName>
    <alternativeName>
        <fullName evidence="8">Terpene synthase 8</fullName>
    </alternativeName>
</protein>